<feature type="chain" id="PRO_1000051329" description="Small ribosomal subunit protein uS9">
    <location>
        <begin position="1"/>
        <end position="130"/>
    </location>
</feature>
<proteinExistence type="inferred from homology"/>
<name>RS9_SHIDS</name>
<reference key="1">
    <citation type="journal article" date="2005" name="Nucleic Acids Res.">
        <title>Genome dynamics and diversity of Shigella species, the etiologic agents of bacillary dysentery.</title>
        <authorList>
            <person name="Yang F."/>
            <person name="Yang J."/>
            <person name="Zhang X."/>
            <person name="Chen L."/>
            <person name="Jiang Y."/>
            <person name="Yan Y."/>
            <person name="Tang X."/>
            <person name="Wang J."/>
            <person name="Xiong Z."/>
            <person name="Dong J."/>
            <person name="Xue Y."/>
            <person name="Zhu Y."/>
            <person name="Xu X."/>
            <person name="Sun L."/>
            <person name="Chen S."/>
            <person name="Nie H."/>
            <person name="Peng J."/>
            <person name="Xu J."/>
            <person name="Wang Y."/>
            <person name="Yuan Z."/>
            <person name="Wen Y."/>
            <person name="Yao Z."/>
            <person name="Shen Y."/>
            <person name="Qiang B."/>
            <person name="Hou Y."/>
            <person name="Yu J."/>
            <person name="Jin Q."/>
        </authorList>
    </citation>
    <scope>NUCLEOTIDE SEQUENCE [LARGE SCALE GENOMIC DNA]</scope>
    <source>
        <strain>Sd197</strain>
    </source>
</reference>
<evidence type="ECO:0000255" key="1">
    <source>
        <dbReference type="HAMAP-Rule" id="MF_00532"/>
    </source>
</evidence>
<evidence type="ECO:0000305" key="2"/>
<sequence length="130" mass="14886">MAENQYYGTGRRKSSTARVFIKPGNGKIVINQRSLEQYFGRETARMVVRQPLELVDMVEKLDLYITVKGGGISGQAGAIRHGITRALMEYDESLRSELRKAGFVTRDARQVERKKVGLRKARRRPQFSKR</sequence>
<gene>
    <name evidence="1" type="primary">rpsI</name>
    <name type="ordered locus">SDY_3406</name>
</gene>
<accession>Q32BA9</accession>
<protein>
    <recommendedName>
        <fullName evidence="1">Small ribosomal subunit protein uS9</fullName>
    </recommendedName>
    <alternativeName>
        <fullName evidence="2">30S ribosomal protein S9</fullName>
    </alternativeName>
</protein>
<keyword id="KW-1185">Reference proteome</keyword>
<keyword id="KW-0687">Ribonucleoprotein</keyword>
<keyword id="KW-0689">Ribosomal protein</keyword>
<organism>
    <name type="scientific">Shigella dysenteriae serotype 1 (strain Sd197)</name>
    <dbReference type="NCBI Taxonomy" id="300267"/>
    <lineage>
        <taxon>Bacteria</taxon>
        <taxon>Pseudomonadati</taxon>
        <taxon>Pseudomonadota</taxon>
        <taxon>Gammaproteobacteria</taxon>
        <taxon>Enterobacterales</taxon>
        <taxon>Enterobacteriaceae</taxon>
        <taxon>Shigella</taxon>
    </lineage>
</organism>
<dbReference type="EMBL" id="CP000034">
    <property type="protein sequence ID" value="ABB63396.1"/>
    <property type="molecule type" value="Genomic_DNA"/>
</dbReference>
<dbReference type="RefSeq" id="WP_000829824.1">
    <property type="nucleotide sequence ID" value="NC_007606.1"/>
</dbReference>
<dbReference type="RefSeq" id="YP_404887.1">
    <property type="nucleotide sequence ID" value="NC_007606.1"/>
</dbReference>
<dbReference type="SMR" id="Q32BA9"/>
<dbReference type="STRING" id="300267.SDY_3406"/>
<dbReference type="EnsemblBacteria" id="ABB63396">
    <property type="protein sequence ID" value="ABB63396"/>
    <property type="gene ID" value="SDY_3406"/>
</dbReference>
<dbReference type="KEGG" id="sdy:SDY_3406"/>
<dbReference type="PATRIC" id="fig|300267.13.peg.4064"/>
<dbReference type="HOGENOM" id="CLU_046483_2_1_6"/>
<dbReference type="Proteomes" id="UP000002716">
    <property type="component" value="Chromosome"/>
</dbReference>
<dbReference type="GO" id="GO:0022627">
    <property type="term" value="C:cytosolic small ribosomal subunit"/>
    <property type="evidence" value="ECO:0007669"/>
    <property type="project" value="TreeGrafter"/>
</dbReference>
<dbReference type="GO" id="GO:0003723">
    <property type="term" value="F:RNA binding"/>
    <property type="evidence" value="ECO:0007669"/>
    <property type="project" value="TreeGrafter"/>
</dbReference>
<dbReference type="GO" id="GO:0003735">
    <property type="term" value="F:structural constituent of ribosome"/>
    <property type="evidence" value="ECO:0007669"/>
    <property type="project" value="InterPro"/>
</dbReference>
<dbReference type="GO" id="GO:0006412">
    <property type="term" value="P:translation"/>
    <property type="evidence" value="ECO:0007669"/>
    <property type="project" value="UniProtKB-UniRule"/>
</dbReference>
<dbReference type="FunFam" id="3.30.230.10:FF:000001">
    <property type="entry name" value="30S ribosomal protein S9"/>
    <property type="match status" value="1"/>
</dbReference>
<dbReference type="Gene3D" id="3.30.230.10">
    <property type="match status" value="1"/>
</dbReference>
<dbReference type="HAMAP" id="MF_00532_B">
    <property type="entry name" value="Ribosomal_uS9_B"/>
    <property type="match status" value="1"/>
</dbReference>
<dbReference type="InterPro" id="IPR020568">
    <property type="entry name" value="Ribosomal_Su5_D2-typ_SF"/>
</dbReference>
<dbReference type="InterPro" id="IPR000754">
    <property type="entry name" value="Ribosomal_uS9"/>
</dbReference>
<dbReference type="InterPro" id="IPR023035">
    <property type="entry name" value="Ribosomal_uS9_bac/plastid"/>
</dbReference>
<dbReference type="InterPro" id="IPR020574">
    <property type="entry name" value="Ribosomal_uS9_CS"/>
</dbReference>
<dbReference type="InterPro" id="IPR014721">
    <property type="entry name" value="Ribsml_uS5_D2-typ_fold_subgr"/>
</dbReference>
<dbReference type="NCBIfam" id="NF001099">
    <property type="entry name" value="PRK00132.1"/>
    <property type="match status" value="1"/>
</dbReference>
<dbReference type="PANTHER" id="PTHR21569">
    <property type="entry name" value="RIBOSOMAL PROTEIN S9"/>
    <property type="match status" value="1"/>
</dbReference>
<dbReference type="PANTHER" id="PTHR21569:SF1">
    <property type="entry name" value="SMALL RIBOSOMAL SUBUNIT PROTEIN US9M"/>
    <property type="match status" value="1"/>
</dbReference>
<dbReference type="Pfam" id="PF00380">
    <property type="entry name" value="Ribosomal_S9"/>
    <property type="match status" value="1"/>
</dbReference>
<dbReference type="SUPFAM" id="SSF54211">
    <property type="entry name" value="Ribosomal protein S5 domain 2-like"/>
    <property type="match status" value="1"/>
</dbReference>
<dbReference type="PROSITE" id="PS00360">
    <property type="entry name" value="RIBOSOMAL_S9"/>
    <property type="match status" value="1"/>
</dbReference>
<comment type="similarity">
    <text evidence="1">Belongs to the universal ribosomal protein uS9 family.</text>
</comment>